<gene>
    <name evidence="1" type="primary">tusA</name>
    <name type="ordered locus">YPTS_0229</name>
</gene>
<feature type="chain" id="PRO_1000199938" description="Sulfur carrier protein TusA">
    <location>
        <begin position="1"/>
        <end position="84"/>
    </location>
</feature>
<feature type="active site" description="Cysteine persulfide intermediate" evidence="1">
    <location>
        <position position="19"/>
    </location>
</feature>
<protein>
    <recommendedName>
        <fullName evidence="1">Sulfur carrier protein TusA</fullName>
    </recommendedName>
    <alternativeName>
        <fullName evidence="1">Sulfur mediator TusA</fullName>
    </alternativeName>
    <alternativeName>
        <fullName evidence="1">Sulfur transfer protein TusA</fullName>
    </alternativeName>
    <alternativeName>
        <fullName evidence="1">tRNA 2-thiouridine synthesizing protein A</fullName>
    </alternativeName>
</protein>
<name>TUSA_YERPB</name>
<organism>
    <name type="scientific">Yersinia pseudotuberculosis serotype IB (strain PB1/+)</name>
    <dbReference type="NCBI Taxonomy" id="502801"/>
    <lineage>
        <taxon>Bacteria</taxon>
        <taxon>Pseudomonadati</taxon>
        <taxon>Pseudomonadota</taxon>
        <taxon>Gammaproteobacteria</taxon>
        <taxon>Enterobacterales</taxon>
        <taxon>Yersiniaceae</taxon>
        <taxon>Yersinia</taxon>
    </lineage>
</organism>
<sequence>MTDIFANPDKTLDALGLRCPEPVMMVRKTVRHMEEGQTLLIIADDPATTRDIPGFCRFMDHQLLAQDTEQTPYRYLVRKGITAG</sequence>
<proteinExistence type="inferred from homology"/>
<accession>B2K098</accession>
<comment type="function">
    <text evidence="1">Sulfur carrier protein involved in sulfur trafficking in the cell. Part of a sulfur-relay system required for 2-thiolation during synthesis of 2-thiouridine of the modified wobble base 5-methylaminomethyl-2-thiouridine (mnm(5)s(2)U) in tRNA. Interacts with IscS and stimulates its cysteine desulfurase activity. Accepts an activated sulfur from IscS, which is then transferred to TusD, and thus determines the direction of sulfur flow from IscS to 2-thiouridine formation. Also appears to be involved in sulfur transfer for the biosynthesis of molybdopterin.</text>
</comment>
<comment type="pathway">
    <text evidence="1">tRNA modification.</text>
</comment>
<comment type="subunit">
    <text evidence="1">Interacts with IscS.</text>
</comment>
<comment type="subcellular location">
    <subcellularLocation>
        <location evidence="1">Cytoplasm</location>
    </subcellularLocation>
</comment>
<comment type="similarity">
    <text evidence="1">Belongs to the sulfur carrier protein TusA family.</text>
</comment>
<reference key="1">
    <citation type="submission" date="2008-04" db="EMBL/GenBank/DDBJ databases">
        <title>Complete sequence of Yersinia pseudotuberculosis PB1/+.</title>
        <authorList>
            <person name="Copeland A."/>
            <person name="Lucas S."/>
            <person name="Lapidus A."/>
            <person name="Glavina del Rio T."/>
            <person name="Dalin E."/>
            <person name="Tice H."/>
            <person name="Bruce D."/>
            <person name="Goodwin L."/>
            <person name="Pitluck S."/>
            <person name="Munk A.C."/>
            <person name="Brettin T."/>
            <person name="Detter J.C."/>
            <person name="Han C."/>
            <person name="Tapia R."/>
            <person name="Schmutz J."/>
            <person name="Larimer F."/>
            <person name="Land M."/>
            <person name="Hauser L."/>
            <person name="Challacombe J.F."/>
            <person name="Green L."/>
            <person name="Lindler L.E."/>
            <person name="Nikolich M.P."/>
            <person name="Richardson P."/>
        </authorList>
    </citation>
    <scope>NUCLEOTIDE SEQUENCE [LARGE SCALE GENOMIC DNA]</scope>
    <source>
        <strain>PB1/+</strain>
    </source>
</reference>
<dbReference type="EMBL" id="CP001048">
    <property type="protein sequence ID" value="ACC87226.1"/>
    <property type="molecule type" value="Genomic_DNA"/>
</dbReference>
<dbReference type="RefSeq" id="WP_002215973.1">
    <property type="nucleotide sequence ID" value="NZ_CP009780.1"/>
</dbReference>
<dbReference type="SMR" id="B2K098"/>
<dbReference type="GeneID" id="57974887"/>
<dbReference type="KEGG" id="ypb:YPTS_0229"/>
<dbReference type="PATRIC" id="fig|502801.10.peg.3908"/>
<dbReference type="GO" id="GO:0005737">
    <property type="term" value="C:cytoplasm"/>
    <property type="evidence" value="ECO:0007669"/>
    <property type="project" value="UniProtKB-SubCell"/>
</dbReference>
<dbReference type="GO" id="GO:0097163">
    <property type="term" value="F:sulfur carrier activity"/>
    <property type="evidence" value="ECO:0007669"/>
    <property type="project" value="UniProtKB-UniRule"/>
</dbReference>
<dbReference type="GO" id="GO:0002143">
    <property type="term" value="P:tRNA wobble position uridine thiolation"/>
    <property type="evidence" value="ECO:0007669"/>
    <property type="project" value="InterPro"/>
</dbReference>
<dbReference type="CDD" id="cd03423">
    <property type="entry name" value="SirA"/>
    <property type="match status" value="1"/>
</dbReference>
<dbReference type="Gene3D" id="3.30.110.40">
    <property type="entry name" value="TusA-like domain"/>
    <property type="match status" value="1"/>
</dbReference>
<dbReference type="HAMAP" id="MF_00413">
    <property type="entry name" value="Thiourid_synth_A"/>
    <property type="match status" value="1"/>
</dbReference>
<dbReference type="InterPro" id="IPR022931">
    <property type="entry name" value="Sulphur_carrier_TusA"/>
</dbReference>
<dbReference type="InterPro" id="IPR001455">
    <property type="entry name" value="TusA-like"/>
</dbReference>
<dbReference type="InterPro" id="IPR036868">
    <property type="entry name" value="TusA-like_sf"/>
</dbReference>
<dbReference type="NCBIfam" id="NF001423">
    <property type="entry name" value="PRK00299.1"/>
    <property type="match status" value="1"/>
</dbReference>
<dbReference type="PANTHER" id="PTHR33279:SF2">
    <property type="entry name" value="SULFUR CARRIER PROTEIN TUSA"/>
    <property type="match status" value="1"/>
</dbReference>
<dbReference type="PANTHER" id="PTHR33279">
    <property type="entry name" value="SULFUR CARRIER PROTEIN YEDF-RELATED"/>
    <property type="match status" value="1"/>
</dbReference>
<dbReference type="Pfam" id="PF01206">
    <property type="entry name" value="TusA"/>
    <property type="match status" value="1"/>
</dbReference>
<dbReference type="SUPFAM" id="SSF64307">
    <property type="entry name" value="SirA-like"/>
    <property type="match status" value="1"/>
</dbReference>
<dbReference type="PROSITE" id="PS01148">
    <property type="entry name" value="UPF0033"/>
    <property type="match status" value="1"/>
</dbReference>
<evidence type="ECO:0000255" key="1">
    <source>
        <dbReference type="HAMAP-Rule" id="MF_00413"/>
    </source>
</evidence>
<keyword id="KW-0963">Cytoplasm</keyword>
<keyword id="KW-0819">tRNA processing</keyword>